<name>METH_MYCLE</name>
<sequence>MRVTAANQHQYDTDLLETLAQRVMVGDGAMGTQLQDAELTLDDFRGLEGCNEILNETRPDVLETIHRRYFEAGADLVETNTFGCNLSNLGDYDIADKIRDLSQRGTVIARRVADELTTPDHKRYVLGSMGPGTKLPTLGHTEYRVVRDAYTESALGMLDGGADAVLVETCQDLLQLKAAVLGSRRAMTQAGRHIPVFVHVTVETTGTMLLGSEIGAALAAVEPLGVDMIGLNCATGPAEMSEHLRHLSKHARIPVSVMPNAGLPVLGAKGAEYPLQPDELAEALAGFIAEFGLSLVGGCCGTTPDHIREVAAAVARCNDGTVPRGERHVTYEPSVSSLYTAIPFAQKPSVLMIGERTNANGSKVFREAMIAEDYQKCLDIAKDQTRGGAHLLDLCVDYVGRNGVADMKALAGRLATVSTLPIMLDSTEIPVLQAGLEHLGGRCVINSVNYEDGDGPESRFVKTMELVAEHGAAVVALTIDEQGQARTVEKKVEVAERLINDITSNWGVDKSAILIDCLTFTIATGQEESRKDGIETIDAIRELKKRHPAVQTTLGLSNISFGLNPSARQVLNSVFLHECQEAGLDSAIVHASKILPINRIPEEQRQAALDLVYDRRREGYDPLQKLMWLFKGVSSPSSKETREAELAKLPLFDRLAQRIVDGERNGLDVDLDEAMTQKPPLAIINENLLDGMKTVGELFGSGQMQLPFVLQSAEVMKAAVAYLEPHMEKSDCDFGKGLAKGRIVLATVKGDVHDIGKNLVDIILSNNGYEVVNLGIKQPITNILEVAEDKSADVVGMSGLLVKSTVIMKENLEEMNTRGVAEKFPVLLGGAALTRSYVENDLAEVYEGEVHYARDAFEGLKLMDTIMSAKRGEALAPGSPESLAAEADRNKETERKARHERSKRIAVQRKAAEEPVEVPERSDVPSDVEVPAPPFWGSRIIKGLAVADYTGFLDERALFLGQWGLRGVRGGAGPSYEDLVQTEGRPRLRYWLDRLSTYGVLAYAAVVYGYFPAVSEDNDIVVLAEPRPDAEQRYRFTFPRQQRGRFLCIADFIRSRDLATERSEVDVLPFQLVTMGQPIADFVGELFVSNSYRDYLEVHGIGVQLTEALAEYWHRRIREELKFSGNRTMSADDPEAVEDYFKLGYRGARFAFGYGACPDLEDRIKMMELLQPERIGVTISEELQLHPEQSTDAFVLHHPAAKYFNV</sequence>
<accession>Q49775</accession>
<accession>Q9CC37</accession>
<accession>Q9S378</accession>
<dbReference type="EC" id="2.1.1.13"/>
<dbReference type="EMBL" id="U00017">
    <property type="protein sequence ID" value="AAA17182.1"/>
    <property type="status" value="ALT_FRAME"/>
    <property type="molecule type" value="Genomic_DNA"/>
</dbReference>
<dbReference type="EMBL" id="AL035310">
    <property type="protein sequence ID" value="CAA22918.1"/>
    <property type="status" value="ALT_INIT"/>
    <property type="molecule type" value="Genomic_DNA"/>
</dbReference>
<dbReference type="EMBL" id="AL583921">
    <property type="protein sequence ID" value="CAC31688.1"/>
    <property type="molecule type" value="Genomic_DNA"/>
</dbReference>
<dbReference type="PIR" id="E87072">
    <property type="entry name" value="E87072"/>
</dbReference>
<dbReference type="PIR" id="S72842">
    <property type="entry name" value="S72842"/>
</dbReference>
<dbReference type="RefSeq" id="NP_301940.1">
    <property type="nucleotide sequence ID" value="NC_002677.1"/>
</dbReference>
<dbReference type="RefSeq" id="WP_010908261.1">
    <property type="nucleotide sequence ID" value="NC_002677.1"/>
</dbReference>
<dbReference type="SMR" id="Q49775"/>
<dbReference type="STRING" id="272631.gene:17575141"/>
<dbReference type="KEGG" id="mle:ML1307"/>
<dbReference type="PATRIC" id="fig|272631.5.peg.2411"/>
<dbReference type="Leproma" id="ML1307"/>
<dbReference type="eggNOG" id="COG0646">
    <property type="taxonomic scope" value="Bacteria"/>
</dbReference>
<dbReference type="eggNOG" id="COG1410">
    <property type="taxonomic scope" value="Bacteria"/>
</dbReference>
<dbReference type="HOGENOM" id="CLU_004914_4_0_11"/>
<dbReference type="OrthoDB" id="9803687at2"/>
<dbReference type="UniPathway" id="UPA00051">
    <property type="reaction ID" value="UER00081"/>
</dbReference>
<dbReference type="Proteomes" id="UP000000806">
    <property type="component" value="Chromosome"/>
</dbReference>
<dbReference type="GO" id="GO:0005829">
    <property type="term" value="C:cytosol"/>
    <property type="evidence" value="ECO:0007669"/>
    <property type="project" value="TreeGrafter"/>
</dbReference>
<dbReference type="GO" id="GO:0031419">
    <property type="term" value="F:cobalamin binding"/>
    <property type="evidence" value="ECO:0007669"/>
    <property type="project" value="UniProtKB-KW"/>
</dbReference>
<dbReference type="GO" id="GO:0008705">
    <property type="term" value="F:methionine synthase activity"/>
    <property type="evidence" value="ECO:0007669"/>
    <property type="project" value="UniProtKB-EC"/>
</dbReference>
<dbReference type="GO" id="GO:0008270">
    <property type="term" value="F:zinc ion binding"/>
    <property type="evidence" value="ECO:0007669"/>
    <property type="project" value="InterPro"/>
</dbReference>
<dbReference type="GO" id="GO:0050667">
    <property type="term" value="P:homocysteine metabolic process"/>
    <property type="evidence" value="ECO:0007669"/>
    <property type="project" value="TreeGrafter"/>
</dbReference>
<dbReference type="GO" id="GO:0032259">
    <property type="term" value="P:methylation"/>
    <property type="evidence" value="ECO:0007669"/>
    <property type="project" value="UniProtKB-KW"/>
</dbReference>
<dbReference type="GO" id="GO:0046653">
    <property type="term" value="P:tetrahydrofolate metabolic process"/>
    <property type="evidence" value="ECO:0007669"/>
    <property type="project" value="TreeGrafter"/>
</dbReference>
<dbReference type="CDD" id="cd02069">
    <property type="entry name" value="methionine_synthase_B12_BD"/>
    <property type="match status" value="1"/>
</dbReference>
<dbReference type="CDD" id="cd00740">
    <property type="entry name" value="MeTr"/>
    <property type="match status" value="1"/>
</dbReference>
<dbReference type="FunFam" id="1.10.1240.10:FF:000002">
    <property type="entry name" value="Methionine synthase"/>
    <property type="match status" value="1"/>
</dbReference>
<dbReference type="FunFam" id="3.20.20.20:FF:000007">
    <property type="entry name" value="Methionine synthase"/>
    <property type="match status" value="1"/>
</dbReference>
<dbReference type="FunFam" id="3.20.20.330:FF:000006">
    <property type="entry name" value="Methionine synthase"/>
    <property type="match status" value="1"/>
</dbReference>
<dbReference type="FunFam" id="3.40.50.280:FF:000004">
    <property type="entry name" value="Methionine synthase"/>
    <property type="match status" value="1"/>
</dbReference>
<dbReference type="Gene3D" id="3.40.50.280">
    <property type="entry name" value="Cobalamin-binding domain"/>
    <property type="match status" value="1"/>
</dbReference>
<dbReference type="Gene3D" id="3.20.20.20">
    <property type="entry name" value="Dihydropteroate synthase-like"/>
    <property type="match status" value="1"/>
</dbReference>
<dbReference type="Gene3D" id="3.20.20.330">
    <property type="entry name" value="Homocysteine-binding-like domain"/>
    <property type="match status" value="1"/>
</dbReference>
<dbReference type="Gene3D" id="1.10.1240.10">
    <property type="entry name" value="Methionine synthase domain"/>
    <property type="match status" value="1"/>
</dbReference>
<dbReference type="Gene3D" id="3.10.196.10">
    <property type="entry name" value="Vitamin B12-dependent methionine synthase, activation domain"/>
    <property type="match status" value="1"/>
</dbReference>
<dbReference type="InterPro" id="IPR003759">
    <property type="entry name" value="Cbl-bd_cap"/>
</dbReference>
<dbReference type="InterPro" id="IPR006158">
    <property type="entry name" value="Cobalamin-bd"/>
</dbReference>
<dbReference type="InterPro" id="IPR036724">
    <property type="entry name" value="Cobalamin-bd_sf"/>
</dbReference>
<dbReference type="InterPro" id="IPR011005">
    <property type="entry name" value="Dihydropteroate_synth-like_sf"/>
</dbReference>
<dbReference type="InterPro" id="IPR003726">
    <property type="entry name" value="HCY_dom"/>
</dbReference>
<dbReference type="InterPro" id="IPR036589">
    <property type="entry name" value="HCY_dom_sf"/>
</dbReference>
<dbReference type="InterPro" id="IPR050554">
    <property type="entry name" value="Met_Synthase/Corrinoid"/>
</dbReference>
<dbReference type="InterPro" id="IPR033706">
    <property type="entry name" value="Met_synthase_B12-bd"/>
</dbReference>
<dbReference type="InterPro" id="IPR011822">
    <property type="entry name" value="MetH"/>
</dbReference>
<dbReference type="InterPro" id="IPR036594">
    <property type="entry name" value="Meth_synthase_dom"/>
</dbReference>
<dbReference type="InterPro" id="IPR000489">
    <property type="entry name" value="Pterin-binding_dom"/>
</dbReference>
<dbReference type="InterPro" id="IPR004223">
    <property type="entry name" value="VitB12-dep_Met_synth_activ_dom"/>
</dbReference>
<dbReference type="InterPro" id="IPR037010">
    <property type="entry name" value="VitB12-dep_Met_synth_activ_sf"/>
</dbReference>
<dbReference type="NCBIfam" id="TIGR02082">
    <property type="entry name" value="metH"/>
    <property type="match status" value="1"/>
</dbReference>
<dbReference type="PANTHER" id="PTHR45833">
    <property type="entry name" value="METHIONINE SYNTHASE"/>
    <property type="match status" value="1"/>
</dbReference>
<dbReference type="PANTHER" id="PTHR45833:SF1">
    <property type="entry name" value="METHIONINE SYNTHASE"/>
    <property type="match status" value="1"/>
</dbReference>
<dbReference type="Pfam" id="PF02310">
    <property type="entry name" value="B12-binding"/>
    <property type="match status" value="1"/>
</dbReference>
<dbReference type="Pfam" id="PF02607">
    <property type="entry name" value="B12-binding_2"/>
    <property type="match status" value="1"/>
</dbReference>
<dbReference type="Pfam" id="PF02965">
    <property type="entry name" value="Met_synt_B12"/>
    <property type="match status" value="1"/>
</dbReference>
<dbReference type="Pfam" id="PF00809">
    <property type="entry name" value="Pterin_bind"/>
    <property type="match status" value="1"/>
</dbReference>
<dbReference type="Pfam" id="PF02574">
    <property type="entry name" value="S-methyl_trans"/>
    <property type="match status" value="1"/>
</dbReference>
<dbReference type="PIRSF" id="PIRSF000381">
    <property type="entry name" value="MetH"/>
    <property type="match status" value="1"/>
</dbReference>
<dbReference type="SMART" id="SM01018">
    <property type="entry name" value="B12-binding_2"/>
    <property type="match status" value="1"/>
</dbReference>
<dbReference type="SUPFAM" id="SSF52242">
    <property type="entry name" value="Cobalamin (vitamin B12)-binding domain"/>
    <property type="match status" value="1"/>
</dbReference>
<dbReference type="SUPFAM" id="SSF51717">
    <property type="entry name" value="Dihydropteroate synthetase-like"/>
    <property type="match status" value="1"/>
</dbReference>
<dbReference type="SUPFAM" id="SSF82282">
    <property type="entry name" value="Homocysteine S-methyltransferase"/>
    <property type="match status" value="1"/>
</dbReference>
<dbReference type="SUPFAM" id="SSF56507">
    <property type="entry name" value="Methionine synthase activation domain-like"/>
    <property type="match status" value="1"/>
</dbReference>
<dbReference type="SUPFAM" id="SSF47644">
    <property type="entry name" value="Methionine synthase domain"/>
    <property type="match status" value="1"/>
</dbReference>
<dbReference type="PROSITE" id="PS50974">
    <property type="entry name" value="ADOMET_ACTIVATION"/>
    <property type="match status" value="1"/>
</dbReference>
<dbReference type="PROSITE" id="PS51332">
    <property type="entry name" value="B12_BINDING"/>
    <property type="match status" value="1"/>
</dbReference>
<dbReference type="PROSITE" id="PS51337">
    <property type="entry name" value="B12_BINDING_NTER"/>
    <property type="match status" value="1"/>
</dbReference>
<dbReference type="PROSITE" id="PS50970">
    <property type="entry name" value="HCY"/>
    <property type="match status" value="1"/>
</dbReference>
<dbReference type="PROSITE" id="PS50972">
    <property type="entry name" value="PTERIN_BINDING"/>
    <property type="match status" value="1"/>
</dbReference>
<evidence type="ECO:0000250" key="1"/>
<evidence type="ECO:0000250" key="2">
    <source>
        <dbReference type="UniProtKB" id="P13009"/>
    </source>
</evidence>
<evidence type="ECO:0000255" key="3">
    <source>
        <dbReference type="PROSITE-ProRule" id="PRU00333"/>
    </source>
</evidence>
<evidence type="ECO:0000255" key="4">
    <source>
        <dbReference type="PROSITE-ProRule" id="PRU00334"/>
    </source>
</evidence>
<evidence type="ECO:0000255" key="5">
    <source>
        <dbReference type="PROSITE-ProRule" id="PRU00346"/>
    </source>
</evidence>
<evidence type="ECO:0000255" key="6">
    <source>
        <dbReference type="PROSITE-ProRule" id="PRU00666"/>
    </source>
</evidence>
<evidence type="ECO:0000255" key="7">
    <source>
        <dbReference type="PROSITE-ProRule" id="PRU00667"/>
    </source>
</evidence>
<evidence type="ECO:0000256" key="8">
    <source>
        <dbReference type="SAM" id="MobiDB-lite"/>
    </source>
</evidence>
<evidence type="ECO:0000305" key="9"/>
<keyword id="KW-0028">Amino-acid biosynthesis</keyword>
<keyword id="KW-0846">Cobalamin</keyword>
<keyword id="KW-0170">Cobalt</keyword>
<keyword id="KW-0479">Metal-binding</keyword>
<keyword id="KW-0486">Methionine biosynthesis</keyword>
<keyword id="KW-0489">Methyltransferase</keyword>
<keyword id="KW-1185">Reference proteome</keyword>
<keyword id="KW-0677">Repeat</keyword>
<keyword id="KW-0949">S-adenosyl-L-methionine</keyword>
<keyword id="KW-0808">Transferase</keyword>
<keyword id="KW-0862">Zinc</keyword>
<organism>
    <name type="scientific">Mycobacterium leprae (strain TN)</name>
    <dbReference type="NCBI Taxonomy" id="272631"/>
    <lineage>
        <taxon>Bacteria</taxon>
        <taxon>Bacillati</taxon>
        <taxon>Actinomycetota</taxon>
        <taxon>Actinomycetes</taxon>
        <taxon>Mycobacteriales</taxon>
        <taxon>Mycobacteriaceae</taxon>
        <taxon>Mycobacterium</taxon>
    </lineage>
</organism>
<proteinExistence type="inferred from homology"/>
<protein>
    <recommendedName>
        <fullName>Methionine synthase</fullName>
        <ecNumber>2.1.1.13</ecNumber>
    </recommendedName>
    <alternativeName>
        <fullName>5-methyltetrahydrofolate--homocysteine methyltransferase</fullName>
    </alternativeName>
    <alternativeName>
        <fullName>Methionine synthase, vitamin-B12 dependent</fullName>
        <shortName>MS</shortName>
    </alternativeName>
</protein>
<reference key="1">
    <citation type="submission" date="1994-03" db="EMBL/GenBank/DDBJ databases">
        <authorList>
            <person name="Smith D.R."/>
            <person name="Robison K."/>
        </authorList>
    </citation>
    <scope>NUCLEOTIDE SEQUENCE [GENOMIC DNA]</scope>
</reference>
<reference key="2">
    <citation type="journal article" date="2001" name="Nature">
        <title>Massive gene decay in the leprosy bacillus.</title>
        <authorList>
            <person name="Cole S.T."/>
            <person name="Eiglmeier K."/>
            <person name="Parkhill J."/>
            <person name="James K.D."/>
            <person name="Thomson N.R."/>
            <person name="Wheeler P.R."/>
            <person name="Honore N."/>
            <person name="Garnier T."/>
            <person name="Churcher C.M."/>
            <person name="Harris D.E."/>
            <person name="Mungall K.L."/>
            <person name="Basham D."/>
            <person name="Brown D."/>
            <person name="Chillingworth T."/>
            <person name="Connor R."/>
            <person name="Davies R.M."/>
            <person name="Devlin K."/>
            <person name="Duthoy S."/>
            <person name="Feltwell T."/>
            <person name="Fraser A."/>
            <person name="Hamlin N."/>
            <person name="Holroyd S."/>
            <person name="Hornsby T."/>
            <person name="Jagels K."/>
            <person name="Lacroix C."/>
            <person name="Maclean J."/>
            <person name="Moule S."/>
            <person name="Murphy L.D."/>
            <person name="Oliver K."/>
            <person name="Quail M.A."/>
            <person name="Rajandream M.A."/>
            <person name="Rutherford K.M."/>
            <person name="Rutter S."/>
            <person name="Seeger K."/>
            <person name="Simon S."/>
            <person name="Simmonds M."/>
            <person name="Skelton J."/>
            <person name="Squares R."/>
            <person name="Squares S."/>
            <person name="Stevens K."/>
            <person name="Taylor K."/>
            <person name="Whitehead S."/>
            <person name="Woodward J.R."/>
            <person name="Barrell B.G."/>
        </authorList>
    </citation>
    <scope>NUCLEOTIDE SEQUENCE [LARGE SCALE GENOMIC DNA]</scope>
    <source>
        <strain>TN</strain>
    </source>
</reference>
<gene>
    <name type="primary">metH</name>
    <name type="ordered locus">ML1307</name>
    <name type="ORF">B2126_C1_157</name>
    <name type="ORF">MLCB2533.04</name>
</gene>
<feature type="chain" id="PRO_0000204533" description="Methionine synthase">
    <location>
        <begin position="1"/>
        <end position="1206"/>
    </location>
</feature>
<feature type="domain" description="Hcy-binding" evidence="3">
    <location>
        <begin position="1"/>
        <end position="314"/>
    </location>
</feature>
<feature type="domain" description="Pterin-binding" evidence="4">
    <location>
        <begin position="350"/>
        <end position="609"/>
    </location>
</feature>
<feature type="domain" description="B12-binding N-terminal" evidence="7">
    <location>
        <begin position="642"/>
        <end position="735"/>
    </location>
</feature>
<feature type="domain" description="B12-binding" evidence="6">
    <location>
        <begin position="740"/>
        <end position="877"/>
    </location>
</feature>
<feature type="domain" description="AdoMet activation" evidence="5">
    <location>
        <begin position="907"/>
        <end position="1206"/>
    </location>
</feature>
<feature type="region of interest" description="Disordered" evidence="8">
    <location>
        <begin position="873"/>
        <end position="925"/>
    </location>
</feature>
<feature type="compositionally biased region" description="Basic and acidic residues" evidence="8">
    <location>
        <begin position="886"/>
        <end position="897"/>
    </location>
</feature>
<feature type="compositionally biased region" description="Basic residues" evidence="8">
    <location>
        <begin position="898"/>
        <end position="907"/>
    </location>
</feature>
<feature type="compositionally biased region" description="Basic and acidic residues" evidence="8">
    <location>
        <begin position="910"/>
        <end position="924"/>
    </location>
</feature>
<feature type="binding site" evidence="3">
    <location>
        <position position="233"/>
    </location>
    <ligand>
        <name>Zn(2+)</name>
        <dbReference type="ChEBI" id="CHEBI:29105"/>
    </ligand>
</feature>
<feature type="binding site" evidence="3">
    <location>
        <position position="299"/>
    </location>
    <ligand>
        <name>Zn(2+)</name>
        <dbReference type="ChEBI" id="CHEBI:29105"/>
    </ligand>
</feature>
<feature type="binding site" evidence="3">
    <location>
        <position position="300"/>
    </location>
    <ligand>
        <name>Zn(2+)</name>
        <dbReference type="ChEBI" id="CHEBI:29105"/>
    </ligand>
</feature>
<feature type="binding site" evidence="2">
    <location>
        <begin position="750"/>
        <end position="754"/>
    </location>
    <ligand>
        <name>methylcob(III)alamin</name>
        <dbReference type="ChEBI" id="CHEBI:28115"/>
    </ligand>
</feature>
<feature type="binding site" description="axial binding residue" evidence="2">
    <location>
        <position position="753"/>
    </location>
    <ligand>
        <name>methylcob(III)alamin</name>
        <dbReference type="ChEBI" id="CHEBI:28115"/>
    </ligand>
    <ligandPart>
        <name>Co</name>
        <dbReference type="ChEBI" id="CHEBI:27638"/>
    </ligandPart>
</feature>
<feature type="binding site" evidence="2">
    <location>
        <position position="798"/>
    </location>
    <ligand>
        <name>methylcob(III)alamin</name>
        <dbReference type="ChEBI" id="CHEBI:28115"/>
    </ligand>
</feature>
<feature type="binding site" evidence="2">
    <location>
        <position position="856"/>
    </location>
    <ligand>
        <name>methylcob(III)alamin</name>
        <dbReference type="ChEBI" id="CHEBI:28115"/>
    </ligand>
</feature>
<feature type="binding site" evidence="1">
    <location>
        <position position="954"/>
    </location>
    <ligand>
        <name>S-adenosyl-L-methionine</name>
        <dbReference type="ChEBI" id="CHEBI:59789"/>
    </ligand>
</feature>
<feature type="binding site" evidence="1">
    <location>
        <position position="1149"/>
    </location>
    <ligand>
        <name>S-adenosyl-L-methionine</name>
        <dbReference type="ChEBI" id="CHEBI:59789"/>
    </ligand>
</feature>
<feature type="binding site" evidence="1">
    <location>
        <begin position="1203"/>
        <end position="1204"/>
    </location>
    <ligand>
        <name>S-adenosyl-L-methionine</name>
        <dbReference type="ChEBI" id="CHEBI:59789"/>
    </ligand>
</feature>
<comment type="function">
    <text evidence="1">Catalyzes the transfer of a methyl group from methyl-cobalamin to homocysteine, yielding enzyme-bound cob(I)alamin and methionine. Subsequently, remethylates the cofactor using methyltetrahydrofolate (By similarity).</text>
</comment>
<comment type="catalytic activity">
    <reaction>
        <text>(6S)-5-methyl-5,6,7,8-tetrahydrofolate + L-homocysteine = (6S)-5,6,7,8-tetrahydrofolate + L-methionine</text>
        <dbReference type="Rhea" id="RHEA:11172"/>
        <dbReference type="ChEBI" id="CHEBI:18608"/>
        <dbReference type="ChEBI" id="CHEBI:57453"/>
        <dbReference type="ChEBI" id="CHEBI:57844"/>
        <dbReference type="ChEBI" id="CHEBI:58199"/>
        <dbReference type="EC" id="2.1.1.13"/>
    </reaction>
</comment>
<comment type="cofactor">
    <cofactor evidence="1">
        <name>methylcob(III)alamin</name>
        <dbReference type="ChEBI" id="CHEBI:28115"/>
    </cofactor>
</comment>
<comment type="cofactor">
    <cofactor evidence="1">
        <name>Zn(2+)</name>
        <dbReference type="ChEBI" id="CHEBI:29105"/>
    </cofactor>
    <text evidence="1">Binds 1 zinc ion per subunit.</text>
</comment>
<comment type="pathway">
    <text>Amino-acid biosynthesis; L-methionine biosynthesis via de novo pathway; L-methionine from L-homocysteine (MetH route): step 1/1.</text>
</comment>
<comment type="domain">
    <text evidence="1">Modular enzyme with four functionally distinct domains. The isolated Hcy-binding domain catalyzes methyl transfer from free methylcobalamin to homocysteine. The Hcy-binding domain in association with the pterin-binding domain catalyzes the methylation of cob(I)alamin by methyltetrahydrofolate and the methylation of homocysteine. The B12-binding domain binds the cofactor. The AdoMet activation domain binds S-adenosyl-L-methionine. Under aerobic conditions cob(I)alamin can be converted to inactive cob(II)alamin. Reductive methylation by S-adenosyl-L-methionine and flavodoxin regenerates methylcobalamin (By similarity).</text>
</comment>
<comment type="miscellaneous">
    <text evidence="1">L-homocysteine is bound via the zinc atom.</text>
</comment>
<comment type="similarity">
    <text evidence="9">Belongs to the vitamin-B12 dependent methionine synthase family.</text>
</comment>
<comment type="sequence caution" evidence="9">
    <conflict type="frameshift">
        <sequence resource="EMBL-CDS" id="AAA17182"/>
    </conflict>
</comment>
<comment type="sequence caution" evidence="9">
    <conflict type="erroneous initiation">
        <sequence resource="EMBL-CDS" id="CAA22918"/>
    </conflict>
</comment>